<dbReference type="EC" id="3.1.-.-"/>
<dbReference type="EMBL" id="BC110186">
    <property type="protein sequence ID" value="AAI10187.1"/>
    <property type="molecule type" value="mRNA"/>
</dbReference>
<dbReference type="RefSeq" id="NP_001039682.1">
    <property type="nucleotide sequence ID" value="NM_001046217.2"/>
</dbReference>
<dbReference type="RefSeq" id="XP_024844452.1">
    <property type="nucleotide sequence ID" value="XM_024988684.2"/>
</dbReference>
<dbReference type="SMR" id="Q2YDK1"/>
<dbReference type="FunCoup" id="Q2YDK1">
    <property type="interactions" value="4532"/>
</dbReference>
<dbReference type="STRING" id="9913.ENSBTAP00000058250"/>
<dbReference type="PaxDb" id="9913-ENSBTAP00000001989"/>
<dbReference type="Ensembl" id="ENSBTAT00000001989.4">
    <property type="protein sequence ID" value="ENSBTAP00000001989.3"/>
    <property type="gene ID" value="ENSBTAG00000001518.6"/>
</dbReference>
<dbReference type="GeneID" id="515980"/>
<dbReference type="KEGG" id="bta:515980"/>
<dbReference type="CTD" id="81875"/>
<dbReference type="VEuPathDB" id="HostDB:ENSBTAG00000001518"/>
<dbReference type="VGNC" id="VGNC:30295">
    <property type="gene designation" value="ISG20L2"/>
</dbReference>
<dbReference type="eggNOG" id="KOG2249">
    <property type="taxonomic scope" value="Eukaryota"/>
</dbReference>
<dbReference type="GeneTree" id="ENSGT00940000159724"/>
<dbReference type="HOGENOM" id="CLU_022453_0_0_1"/>
<dbReference type="InParanoid" id="Q2YDK1"/>
<dbReference type="OMA" id="PCPIVDY"/>
<dbReference type="OrthoDB" id="16516at2759"/>
<dbReference type="TreeFam" id="TF354340"/>
<dbReference type="Reactome" id="R-BTA-6791226">
    <property type="pathway name" value="Major pathway of rRNA processing in the nucleolus and cytosol"/>
</dbReference>
<dbReference type="CD-CODE" id="D7FE2080">
    <property type="entry name" value="Nucleolus"/>
</dbReference>
<dbReference type="Proteomes" id="UP000009136">
    <property type="component" value="Chromosome 3"/>
</dbReference>
<dbReference type="Bgee" id="ENSBTAG00000001518">
    <property type="expression patterns" value="Expressed in rumen papilla and 102 other cell types or tissues"/>
</dbReference>
<dbReference type="GO" id="GO:0005730">
    <property type="term" value="C:nucleolus"/>
    <property type="evidence" value="ECO:0007669"/>
    <property type="project" value="UniProtKB-SubCell"/>
</dbReference>
<dbReference type="GO" id="GO:0005634">
    <property type="term" value="C:nucleus"/>
    <property type="evidence" value="ECO:0000318"/>
    <property type="project" value="GO_Central"/>
</dbReference>
<dbReference type="GO" id="GO:0000175">
    <property type="term" value="F:3'-5'-RNA exonuclease activity"/>
    <property type="evidence" value="ECO:0007669"/>
    <property type="project" value="InterPro"/>
</dbReference>
<dbReference type="GO" id="GO:0004527">
    <property type="term" value="F:exonuclease activity"/>
    <property type="evidence" value="ECO:0000318"/>
    <property type="project" value="GO_Central"/>
</dbReference>
<dbReference type="GO" id="GO:0003676">
    <property type="term" value="F:nucleic acid binding"/>
    <property type="evidence" value="ECO:0007669"/>
    <property type="project" value="InterPro"/>
</dbReference>
<dbReference type="GO" id="GO:0042254">
    <property type="term" value="P:ribosome biogenesis"/>
    <property type="evidence" value="ECO:0007669"/>
    <property type="project" value="UniProtKB-KW"/>
</dbReference>
<dbReference type="GO" id="GO:0006396">
    <property type="term" value="P:RNA processing"/>
    <property type="evidence" value="ECO:0000318"/>
    <property type="project" value="GO_Central"/>
</dbReference>
<dbReference type="CDD" id="cd06149">
    <property type="entry name" value="ISG20"/>
    <property type="match status" value="1"/>
</dbReference>
<dbReference type="FunFam" id="3.30.420.10:FF:000007">
    <property type="entry name" value="Interferon-stimulated exonuclease gene 20"/>
    <property type="match status" value="1"/>
</dbReference>
<dbReference type="Gene3D" id="3.30.420.10">
    <property type="entry name" value="Ribonuclease H-like superfamily/Ribonuclease H"/>
    <property type="match status" value="1"/>
</dbReference>
<dbReference type="InterPro" id="IPR013520">
    <property type="entry name" value="Exonuclease_RNaseT/DNA_pol3"/>
</dbReference>
<dbReference type="InterPro" id="IPR037433">
    <property type="entry name" value="ISG20_DEDDh"/>
</dbReference>
<dbReference type="InterPro" id="IPR047021">
    <property type="entry name" value="REXO1/3/4-like"/>
</dbReference>
<dbReference type="InterPro" id="IPR012337">
    <property type="entry name" value="RNaseH-like_sf"/>
</dbReference>
<dbReference type="InterPro" id="IPR036397">
    <property type="entry name" value="RNaseH_sf"/>
</dbReference>
<dbReference type="PANTHER" id="PTHR12801:SF78">
    <property type="entry name" value="INTERFERON-STIMULATED 20 KDA EXONUCLEASE-LIKE 2"/>
    <property type="match status" value="1"/>
</dbReference>
<dbReference type="PANTHER" id="PTHR12801">
    <property type="entry name" value="RNA EXONUCLEASE REXO1 / RECO3 FAMILY MEMBER-RELATED"/>
    <property type="match status" value="1"/>
</dbReference>
<dbReference type="Pfam" id="PF00929">
    <property type="entry name" value="RNase_T"/>
    <property type="match status" value="1"/>
</dbReference>
<dbReference type="SMART" id="SM00479">
    <property type="entry name" value="EXOIII"/>
    <property type="match status" value="1"/>
</dbReference>
<dbReference type="SUPFAM" id="SSF53098">
    <property type="entry name" value="Ribonuclease H-like"/>
    <property type="match status" value="1"/>
</dbReference>
<comment type="function">
    <text evidence="1">3'-&gt; 5'-exoribonuclease involved in ribosome biogenesis in the processing of the 12S pre-rRNA. Displays a strong specificity for a 3'-end containing a free hydroxyl group.</text>
</comment>
<comment type="subcellular location">
    <subcellularLocation>
        <location evidence="1">Nucleus</location>
        <location evidence="1">Nucleolus</location>
    </subcellularLocation>
</comment>
<accession>Q2YDK1</accession>
<name>I20L2_BOVIN</name>
<protein>
    <recommendedName>
        <fullName>Interferon-stimulated 20 kDa exonuclease-like 2</fullName>
        <ecNumber>3.1.-.-</ecNumber>
    </recommendedName>
</protein>
<reference key="1">
    <citation type="submission" date="2005-11" db="EMBL/GenBank/DDBJ databases">
        <authorList>
            <consortium name="NIH - Mammalian Gene Collection (MGC) project"/>
        </authorList>
    </citation>
    <scope>NUCLEOTIDE SEQUENCE [LARGE SCALE MRNA]</scope>
</reference>
<keyword id="KW-0269">Exonuclease</keyword>
<keyword id="KW-0378">Hydrolase</keyword>
<keyword id="KW-0540">Nuclease</keyword>
<keyword id="KW-0539">Nucleus</keyword>
<keyword id="KW-1185">Reference proteome</keyword>
<keyword id="KW-0690">Ribosome biogenesis</keyword>
<proteinExistence type="evidence at transcript level"/>
<sequence length="349" mass="38639">MSTLLLNLDFGEPPPKKALEGNAKHRKFVKKRRLLERKGFLNKKKQPPSKVPKLHSEPSQKGETPRVDGTWKATPLPKKKTTAASSSGSEQSLDKKAAVPWLTPAPSQKAGSVVAKVDLLGEFQSALPKIKSHPTRPQKKGSQKNPPPKNGPQNSTHTHSENKYSGVSQKIPGKMVAIDCEMVGTGPKGHVSSLARCSIVNYDGDVLYDEYILPPCHIVDYRTRWSGIRKQHMVNATPFKIARNQILKILAGKIVVGHAIHNDFKALQYIHPKSLTRDTSHIPLLNRKADCPENATMSLKSLTKKLLNRDIQAGKSGHSSVEDAQATMELYKLVEVEWEQHLAQNPPKD</sequence>
<organism>
    <name type="scientific">Bos taurus</name>
    <name type="common">Bovine</name>
    <dbReference type="NCBI Taxonomy" id="9913"/>
    <lineage>
        <taxon>Eukaryota</taxon>
        <taxon>Metazoa</taxon>
        <taxon>Chordata</taxon>
        <taxon>Craniata</taxon>
        <taxon>Vertebrata</taxon>
        <taxon>Euteleostomi</taxon>
        <taxon>Mammalia</taxon>
        <taxon>Eutheria</taxon>
        <taxon>Laurasiatheria</taxon>
        <taxon>Artiodactyla</taxon>
        <taxon>Ruminantia</taxon>
        <taxon>Pecora</taxon>
        <taxon>Bovidae</taxon>
        <taxon>Bovinae</taxon>
        <taxon>Bos</taxon>
    </lineage>
</organism>
<gene>
    <name type="primary">ISG20L2</name>
</gene>
<evidence type="ECO:0000250" key="1"/>
<evidence type="ECO:0000256" key="2">
    <source>
        <dbReference type="SAM" id="MobiDB-lite"/>
    </source>
</evidence>
<feature type="chain" id="PRO_0000354703" description="Interferon-stimulated 20 kDa exonuclease-like 2">
    <location>
        <begin position="1"/>
        <end position="349"/>
    </location>
</feature>
<feature type="domain" description="Exonuclease">
    <location>
        <begin position="175"/>
        <end position="331"/>
    </location>
</feature>
<feature type="region of interest" description="Disordered" evidence="2">
    <location>
        <begin position="1"/>
        <end position="100"/>
    </location>
</feature>
<feature type="region of interest" description="Disordered" evidence="2">
    <location>
        <begin position="126"/>
        <end position="166"/>
    </location>
</feature>
<feature type="compositionally biased region" description="Basic and acidic residues" evidence="2">
    <location>
        <begin position="14"/>
        <end position="23"/>
    </location>
</feature>
<feature type="compositionally biased region" description="Basic residues" evidence="2">
    <location>
        <begin position="24"/>
        <end position="47"/>
    </location>
</feature>
<feature type="compositionally biased region" description="Basic and acidic residues" evidence="2">
    <location>
        <begin position="54"/>
        <end position="66"/>
    </location>
</feature>
<feature type="compositionally biased region" description="Low complexity" evidence="2">
    <location>
        <begin position="70"/>
        <end position="87"/>
    </location>
</feature>
<feature type="compositionally biased region" description="Basic residues" evidence="2">
    <location>
        <begin position="130"/>
        <end position="142"/>
    </location>
</feature>